<name>HIS1_ECO81</name>
<gene>
    <name evidence="1" type="primary">hisG</name>
    <name type="ordered locus">ECED1_2368</name>
</gene>
<protein>
    <recommendedName>
        <fullName evidence="1">ATP phosphoribosyltransferase</fullName>
        <shortName evidence="1">ATP-PRT</shortName>
        <shortName evidence="1">ATP-PRTase</shortName>
        <ecNumber evidence="1">2.4.2.17</ecNumber>
    </recommendedName>
</protein>
<accession>B7MWT8</accession>
<evidence type="ECO:0000255" key="1">
    <source>
        <dbReference type="HAMAP-Rule" id="MF_00079"/>
    </source>
</evidence>
<proteinExistence type="inferred from homology"/>
<reference key="1">
    <citation type="journal article" date="2009" name="PLoS Genet.">
        <title>Organised genome dynamics in the Escherichia coli species results in highly diverse adaptive paths.</title>
        <authorList>
            <person name="Touchon M."/>
            <person name="Hoede C."/>
            <person name="Tenaillon O."/>
            <person name="Barbe V."/>
            <person name="Baeriswyl S."/>
            <person name="Bidet P."/>
            <person name="Bingen E."/>
            <person name="Bonacorsi S."/>
            <person name="Bouchier C."/>
            <person name="Bouvet O."/>
            <person name="Calteau A."/>
            <person name="Chiapello H."/>
            <person name="Clermont O."/>
            <person name="Cruveiller S."/>
            <person name="Danchin A."/>
            <person name="Diard M."/>
            <person name="Dossat C."/>
            <person name="Karoui M.E."/>
            <person name="Frapy E."/>
            <person name="Garry L."/>
            <person name="Ghigo J.M."/>
            <person name="Gilles A.M."/>
            <person name="Johnson J."/>
            <person name="Le Bouguenec C."/>
            <person name="Lescat M."/>
            <person name="Mangenot S."/>
            <person name="Martinez-Jehanne V."/>
            <person name="Matic I."/>
            <person name="Nassif X."/>
            <person name="Oztas S."/>
            <person name="Petit M.A."/>
            <person name="Pichon C."/>
            <person name="Rouy Z."/>
            <person name="Ruf C.S."/>
            <person name="Schneider D."/>
            <person name="Tourret J."/>
            <person name="Vacherie B."/>
            <person name="Vallenet D."/>
            <person name="Medigue C."/>
            <person name="Rocha E.P.C."/>
            <person name="Denamur E."/>
        </authorList>
    </citation>
    <scope>NUCLEOTIDE SEQUENCE [LARGE SCALE GENOMIC DNA]</scope>
    <source>
        <strain>ED1a</strain>
    </source>
</reference>
<organism>
    <name type="scientific">Escherichia coli O81 (strain ED1a)</name>
    <dbReference type="NCBI Taxonomy" id="585397"/>
    <lineage>
        <taxon>Bacteria</taxon>
        <taxon>Pseudomonadati</taxon>
        <taxon>Pseudomonadota</taxon>
        <taxon>Gammaproteobacteria</taxon>
        <taxon>Enterobacterales</taxon>
        <taxon>Enterobacteriaceae</taxon>
        <taxon>Escherichia</taxon>
    </lineage>
</organism>
<feature type="chain" id="PRO_1000118252" description="ATP phosphoribosyltransferase">
    <location>
        <begin position="1"/>
        <end position="299"/>
    </location>
</feature>
<sequence length="299" mass="33383">MTDNTRLRIAMQKSGRLSDDSRELLARCGIKINLHTQRLIAMAENMPIDILRVRDDDIPGLVMDGVVDLGIIGENVLEEELLNRRAQGEDPRYFTLRRLDFGGCRLSLATPVDEAWDGPLSLNGKRIATSYPHLLKRYLDQKGICFKSCLLNGSVEVAPRAGLADAICDLVSTGATLEANGLREVEVIYRSKACLIQRDGEMEESKQQLIDKLLTRIQGVIQARESKYIMMHAPTERLDEVIALLPGAERPTILPLAGDQQRVAMHMVSSETLFWETMEKLKALGASSILVLPIEKMME</sequence>
<comment type="function">
    <text evidence="1">Catalyzes the condensation of ATP and 5-phosphoribose 1-diphosphate to form N'-(5'-phosphoribosyl)-ATP (PR-ATP). Has a crucial role in the pathway because the rate of histidine biosynthesis seems to be controlled primarily by regulation of HisG enzymatic activity.</text>
</comment>
<comment type="catalytic activity">
    <reaction evidence="1">
        <text>1-(5-phospho-beta-D-ribosyl)-ATP + diphosphate = 5-phospho-alpha-D-ribose 1-diphosphate + ATP</text>
        <dbReference type="Rhea" id="RHEA:18473"/>
        <dbReference type="ChEBI" id="CHEBI:30616"/>
        <dbReference type="ChEBI" id="CHEBI:33019"/>
        <dbReference type="ChEBI" id="CHEBI:58017"/>
        <dbReference type="ChEBI" id="CHEBI:73183"/>
        <dbReference type="EC" id="2.4.2.17"/>
    </reaction>
</comment>
<comment type="cofactor">
    <cofactor evidence="1">
        <name>Mg(2+)</name>
        <dbReference type="ChEBI" id="CHEBI:18420"/>
    </cofactor>
</comment>
<comment type="activity regulation">
    <text evidence="1">Feedback inhibited by histidine.</text>
</comment>
<comment type="pathway">
    <text evidence="1">Amino-acid biosynthesis; L-histidine biosynthesis; L-histidine from 5-phospho-alpha-D-ribose 1-diphosphate: step 1/9.</text>
</comment>
<comment type="subunit">
    <text evidence="1">Equilibrium between an active dimeric form, an inactive hexameric form and higher aggregates. Interconversion between the various forms is largely reversible and is influenced by the natural substrates and inhibitors of the enzyme.</text>
</comment>
<comment type="subcellular location">
    <subcellularLocation>
        <location evidence="1">Cytoplasm</location>
    </subcellularLocation>
</comment>
<comment type="similarity">
    <text evidence="1">Belongs to the ATP phosphoribosyltransferase family. Long subfamily.</text>
</comment>
<dbReference type="EC" id="2.4.2.17" evidence="1"/>
<dbReference type="EMBL" id="CU928162">
    <property type="protein sequence ID" value="CAR08554.2"/>
    <property type="molecule type" value="Genomic_DNA"/>
</dbReference>
<dbReference type="RefSeq" id="WP_000131776.1">
    <property type="nucleotide sequence ID" value="NC_011745.1"/>
</dbReference>
<dbReference type="SMR" id="B7MWT8"/>
<dbReference type="KEGG" id="ecq:ECED1_2368"/>
<dbReference type="HOGENOM" id="CLU_038115_1_0_6"/>
<dbReference type="UniPathway" id="UPA00031">
    <property type="reaction ID" value="UER00006"/>
</dbReference>
<dbReference type="Proteomes" id="UP000000748">
    <property type="component" value="Chromosome"/>
</dbReference>
<dbReference type="GO" id="GO:0005737">
    <property type="term" value="C:cytoplasm"/>
    <property type="evidence" value="ECO:0007669"/>
    <property type="project" value="UniProtKB-SubCell"/>
</dbReference>
<dbReference type="GO" id="GO:0005524">
    <property type="term" value="F:ATP binding"/>
    <property type="evidence" value="ECO:0007669"/>
    <property type="project" value="UniProtKB-KW"/>
</dbReference>
<dbReference type="GO" id="GO:0003879">
    <property type="term" value="F:ATP phosphoribosyltransferase activity"/>
    <property type="evidence" value="ECO:0007669"/>
    <property type="project" value="UniProtKB-UniRule"/>
</dbReference>
<dbReference type="GO" id="GO:0000287">
    <property type="term" value="F:magnesium ion binding"/>
    <property type="evidence" value="ECO:0007669"/>
    <property type="project" value="UniProtKB-UniRule"/>
</dbReference>
<dbReference type="GO" id="GO:0000105">
    <property type="term" value="P:L-histidine biosynthetic process"/>
    <property type="evidence" value="ECO:0007669"/>
    <property type="project" value="UniProtKB-UniRule"/>
</dbReference>
<dbReference type="CDD" id="cd13592">
    <property type="entry name" value="PBP2_HisGL2"/>
    <property type="match status" value="1"/>
</dbReference>
<dbReference type="FunFam" id="3.30.70.120:FF:000002">
    <property type="entry name" value="ATP phosphoribosyltransferase"/>
    <property type="match status" value="1"/>
</dbReference>
<dbReference type="FunFam" id="3.40.190.10:FF:000008">
    <property type="entry name" value="ATP phosphoribosyltransferase"/>
    <property type="match status" value="1"/>
</dbReference>
<dbReference type="Gene3D" id="3.30.70.120">
    <property type="match status" value="1"/>
</dbReference>
<dbReference type="Gene3D" id="3.40.190.10">
    <property type="entry name" value="Periplasmic binding protein-like II"/>
    <property type="match status" value="2"/>
</dbReference>
<dbReference type="HAMAP" id="MF_00079">
    <property type="entry name" value="HisG_Long"/>
    <property type="match status" value="1"/>
</dbReference>
<dbReference type="InterPro" id="IPR020621">
    <property type="entry name" value="ATP-PRT_HisG_long"/>
</dbReference>
<dbReference type="InterPro" id="IPR013820">
    <property type="entry name" value="ATP_PRibTrfase_cat"/>
</dbReference>
<dbReference type="InterPro" id="IPR018198">
    <property type="entry name" value="ATP_PRibTrfase_CS"/>
</dbReference>
<dbReference type="InterPro" id="IPR001348">
    <property type="entry name" value="ATP_PRibTrfase_HisG"/>
</dbReference>
<dbReference type="InterPro" id="IPR013115">
    <property type="entry name" value="HisG_C"/>
</dbReference>
<dbReference type="InterPro" id="IPR011322">
    <property type="entry name" value="N-reg_PII-like_a/b"/>
</dbReference>
<dbReference type="InterPro" id="IPR015867">
    <property type="entry name" value="N-reg_PII/ATP_PRibTrfase_C"/>
</dbReference>
<dbReference type="NCBIfam" id="TIGR00070">
    <property type="entry name" value="hisG"/>
    <property type="match status" value="1"/>
</dbReference>
<dbReference type="NCBIfam" id="TIGR03455">
    <property type="entry name" value="HisG_C-term"/>
    <property type="match status" value="1"/>
</dbReference>
<dbReference type="PANTHER" id="PTHR21403:SF8">
    <property type="entry name" value="ATP PHOSPHORIBOSYLTRANSFERASE"/>
    <property type="match status" value="1"/>
</dbReference>
<dbReference type="PANTHER" id="PTHR21403">
    <property type="entry name" value="ATP PHOSPHORIBOSYLTRANSFERASE ATP-PRTASE"/>
    <property type="match status" value="1"/>
</dbReference>
<dbReference type="Pfam" id="PF01634">
    <property type="entry name" value="HisG"/>
    <property type="match status" value="1"/>
</dbReference>
<dbReference type="Pfam" id="PF08029">
    <property type="entry name" value="HisG_C"/>
    <property type="match status" value="1"/>
</dbReference>
<dbReference type="SUPFAM" id="SSF54913">
    <property type="entry name" value="GlnB-like"/>
    <property type="match status" value="1"/>
</dbReference>
<dbReference type="SUPFAM" id="SSF53850">
    <property type="entry name" value="Periplasmic binding protein-like II"/>
    <property type="match status" value="1"/>
</dbReference>
<dbReference type="PROSITE" id="PS01316">
    <property type="entry name" value="ATP_P_PHORIBOSYLTR"/>
    <property type="match status" value="1"/>
</dbReference>
<keyword id="KW-0028">Amino-acid biosynthesis</keyword>
<keyword id="KW-0067">ATP-binding</keyword>
<keyword id="KW-0963">Cytoplasm</keyword>
<keyword id="KW-0328">Glycosyltransferase</keyword>
<keyword id="KW-0368">Histidine biosynthesis</keyword>
<keyword id="KW-0460">Magnesium</keyword>
<keyword id="KW-0479">Metal-binding</keyword>
<keyword id="KW-0547">Nucleotide-binding</keyword>
<keyword id="KW-0808">Transferase</keyword>